<name>MENE_STAES</name>
<proteinExistence type="inferred from homology"/>
<sequence>MNFWLQEQAQSNGNRLAIVTNQLSLTYEELYHRAKTIAQYLTSLNQKRIGLYISNDIDSVVLIHACWLAHIEIAMINTRLTRHEMINQMNSVDIATIVHTLPLELEGFNLYHFNDLTQLDKHDVSGYKFNLESIASIMFTSGTTGPQKAVPQTFNNHLASAKGCKQSLGFEQNTVWLSVLPIYHISGLSVILRAVIEGFTVRLVKKFQTDDMLTQIKTYPITHMSLVPQTLKWLMDAGLTQPFSLEKILLGGAKLSPQLIEQAFAYRLPVYNSFGMTETCSQFLTASPQMLKERFDTVGKTSENVEVKIKNPNAYGHGELLIKGENVMNGYLYPKYLKDTFDNDGYFQTGDIAEIDDEGYVIIYDRRKDLIISGGENIYPYQIETIAKDFEGIEDAVCVGISDDTWGQVPILYYVTNQDINQNELIEHFENHLARYKIPKKYYQVESLPYTSTGKLQRKKVKSEDLNEGKNNES</sequence>
<reference key="1">
    <citation type="journal article" date="2003" name="Mol. Microbiol.">
        <title>Genome-based analysis of virulence genes in a non-biofilm-forming Staphylococcus epidermidis strain (ATCC 12228).</title>
        <authorList>
            <person name="Zhang Y.-Q."/>
            <person name="Ren S.-X."/>
            <person name="Li H.-L."/>
            <person name="Wang Y.-X."/>
            <person name="Fu G."/>
            <person name="Yang J."/>
            <person name="Qin Z.-Q."/>
            <person name="Miao Y.-G."/>
            <person name="Wang W.-Y."/>
            <person name="Chen R.-S."/>
            <person name="Shen Y."/>
            <person name="Chen Z."/>
            <person name="Yuan Z.-H."/>
            <person name="Zhao G.-P."/>
            <person name="Qu D."/>
            <person name="Danchin A."/>
            <person name="Wen Y.-M."/>
        </authorList>
    </citation>
    <scope>NUCLEOTIDE SEQUENCE [LARGE SCALE GENOMIC DNA]</scope>
    <source>
        <strain>ATCC 12228 / FDA PCI 1200</strain>
    </source>
</reference>
<protein>
    <recommendedName>
        <fullName evidence="1">2-succinylbenzoate--CoA ligase</fullName>
        <ecNumber evidence="1">6.2.1.26</ecNumber>
    </recommendedName>
    <alternativeName>
        <fullName evidence="1">o-succinylbenzoyl-CoA synthetase</fullName>
        <shortName evidence="1">OSB-CoA synthetase</shortName>
    </alternativeName>
</protein>
<accession>Q8CS21</accession>
<organism>
    <name type="scientific">Staphylococcus epidermidis (strain ATCC 12228 / FDA PCI 1200)</name>
    <dbReference type="NCBI Taxonomy" id="176280"/>
    <lineage>
        <taxon>Bacteria</taxon>
        <taxon>Bacillati</taxon>
        <taxon>Bacillota</taxon>
        <taxon>Bacilli</taxon>
        <taxon>Bacillales</taxon>
        <taxon>Staphylococcaceae</taxon>
        <taxon>Staphylococcus</taxon>
    </lineage>
</organism>
<evidence type="ECO:0000255" key="1">
    <source>
        <dbReference type="HAMAP-Rule" id="MF_00731"/>
    </source>
</evidence>
<comment type="function">
    <text evidence="1">Converts 2-succinylbenzoate (OSB) to 2-succinylbenzoyl-CoA (OSB-CoA).</text>
</comment>
<comment type="catalytic activity">
    <reaction evidence="1">
        <text>2-succinylbenzoate + ATP + CoA = 2-succinylbenzoyl-CoA + AMP + diphosphate</text>
        <dbReference type="Rhea" id="RHEA:17009"/>
        <dbReference type="ChEBI" id="CHEBI:18325"/>
        <dbReference type="ChEBI" id="CHEBI:30616"/>
        <dbReference type="ChEBI" id="CHEBI:33019"/>
        <dbReference type="ChEBI" id="CHEBI:57287"/>
        <dbReference type="ChEBI" id="CHEBI:57364"/>
        <dbReference type="ChEBI" id="CHEBI:456215"/>
        <dbReference type="EC" id="6.2.1.26"/>
    </reaction>
</comment>
<comment type="pathway">
    <text evidence="1">Quinol/quinone metabolism; 1,4-dihydroxy-2-naphthoate biosynthesis; 1,4-dihydroxy-2-naphthoate from chorismate: step 5/7.</text>
</comment>
<comment type="pathway">
    <text evidence="1">Quinol/quinone metabolism; menaquinone biosynthesis.</text>
</comment>
<comment type="similarity">
    <text evidence="1">Belongs to the ATP-dependent AMP-binding enzyme family. MenE subfamily.</text>
</comment>
<gene>
    <name evidence="1" type="primary">menE</name>
    <name type="ordered locus">SE_1464</name>
</gene>
<dbReference type="EC" id="6.2.1.26" evidence="1"/>
<dbReference type="EMBL" id="AE015929">
    <property type="protein sequence ID" value="AAO05063.1"/>
    <property type="molecule type" value="Genomic_DNA"/>
</dbReference>
<dbReference type="RefSeq" id="NP_765019.1">
    <property type="nucleotide sequence ID" value="NC_004461.1"/>
</dbReference>
<dbReference type="RefSeq" id="WP_011082721.1">
    <property type="nucleotide sequence ID" value="NC_004461.1"/>
</dbReference>
<dbReference type="SMR" id="Q8CS21"/>
<dbReference type="KEGG" id="sep:SE_1464"/>
<dbReference type="PATRIC" id="fig|176280.10.peg.1430"/>
<dbReference type="eggNOG" id="COG0318">
    <property type="taxonomic scope" value="Bacteria"/>
</dbReference>
<dbReference type="HOGENOM" id="CLU_000022_59_0_9"/>
<dbReference type="OrthoDB" id="9757771at2"/>
<dbReference type="UniPathway" id="UPA00079"/>
<dbReference type="UniPathway" id="UPA01057">
    <property type="reaction ID" value="UER00166"/>
</dbReference>
<dbReference type="Proteomes" id="UP000001411">
    <property type="component" value="Chromosome"/>
</dbReference>
<dbReference type="GO" id="GO:0005524">
    <property type="term" value="F:ATP binding"/>
    <property type="evidence" value="ECO:0007669"/>
    <property type="project" value="UniProtKB-KW"/>
</dbReference>
<dbReference type="GO" id="GO:0031956">
    <property type="term" value="F:medium-chain fatty acid-CoA ligase activity"/>
    <property type="evidence" value="ECO:0007669"/>
    <property type="project" value="TreeGrafter"/>
</dbReference>
<dbReference type="GO" id="GO:0008756">
    <property type="term" value="F:o-succinylbenzoate-CoA ligase activity"/>
    <property type="evidence" value="ECO:0007669"/>
    <property type="project" value="UniProtKB-UniRule"/>
</dbReference>
<dbReference type="GO" id="GO:0006631">
    <property type="term" value="P:fatty acid metabolic process"/>
    <property type="evidence" value="ECO:0007669"/>
    <property type="project" value="TreeGrafter"/>
</dbReference>
<dbReference type="GO" id="GO:0009234">
    <property type="term" value="P:menaquinone biosynthetic process"/>
    <property type="evidence" value="ECO:0007669"/>
    <property type="project" value="UniProtKB-UniRule"/>
</dbReference>
<dbReference type="Gene3D" id="3.30.300.30">
    <property type="match status" value="1"/>
</dbReference>
<dbReference type="Gene3D" id="3.40.50.12780">
    <property type="entry name" value="N-terminal domain of ligase-like"/>
    <property type="match status" value="1"/>
</dbReference>
<dbReference type="HAMAP" id="MF_00731">
    <property type="entry name" value="MenE"/>
    <property type="match status" value="1"/>
</dbReference>
<dbReference type="InterPro" id="IPR025110">
    <property type="entry name" value="AMP-bd_C"/>
</dbReference>
<dbReference type="InterPro" id="IPR045851">
    <property type="entry name" value="AMP-bd_C_sf"/>
</dbReference>
<dbReference type="InterPro" id="IPR000873">
    <property type="entry name" value="AMP-dep_synth/lig_dom"/>
</dbReference>
<dbReference type="InterPro" id="IPR042099">
    <property type="entry name" value="ANL_N_sf"/>
</dbReference>
<dbReference type="InterPro" id="IPR010192">
    <property type="entry name" value="MenE"/>
</dbReference>
<dbReference type="NCBIfam" id="TIGR01923">
    <property type="entry name" value="menE"/>
    <property type="match status" value="1"/>
</dbReference>
<dbReference type="PANTHER" id="PTHR43201">
    <property type="entry name" value="ACYL-COA SYNTHETASE"/>
    <property type="match status" value="1"/>
</dbReference>
<dbReference type="PANTHER" id="PTHR43201:SF5">
    <property type="entry name" value="MEDIUM-CHAIN ACYL-COA LIGASE ACSF2, MITOCHONDRIAL"/>
    <property type="match status" value="1"/>
</dbReference>
<dbReference type="Pfam" id="PF00501">
    <property type="entry name" value="AMP-binding"/>
    <property type="match status" value="1"/>
</dbReference>
<dbReference type="Pfam" id="PF13193">
    <property type="entry name" value="AMP-binding_C"/>
    <property type="match status" value="1"/>
</dbReference>
<dbReference type="SUPFAM" id="SSF56801">
    <property type="entry name" value="Acetyl-CoA synthetase-like"/>
    <property type="match status" value="1"/>
</dbReference>
<feature type="chain" id="PRO_0000193173" description="2-succinylbenzoate--CoA ligase">
    <location>
        <begin position="1"/>
        <end position="474"/>
    </location>
</feature>
<keyword id="KW-0067">ATP-binding</keyword>
<keyword id="KW-0436">Ligase</keyword>
<keyword id="KW-0474">Menaquinone biosynthesis</keyword>
<keyword id="KW-0547">Nucleotide-binding</keyword>